<proteinExistence type="inferred from homology"/>
<dbReference type="EC" id="2.8.1.8" evidence="1"/>
<dbReference type="EMBL" id="CP000766">
    <property type="protein sequence ID" value="ABY73086.1"/>
    <property type="molecule type" value="Genomic_DNA"/>
</dbReference>
<dbReference type="RefSeq" id="WP_012151263.1">
    <property type="nucleotide sequence ID" value="NC_010263.3"/>
</dbReference>
<dbReference type="SMR" id="B0BV26"/>
<dbReference type="GeneID" id="79937771"/>
<dbReference type="KEGG" id="rrj:RrIowa_1352"/>
<dbReference type="eggNOG" id="COG0320">
    <property type="taxonomic scope" value="Bacteria"/>
</dbReference>
<dbReference type="HOGENOM" id="CLU_033144_2_1_5"/>
<dbReference type="UniPathway" id="UPA00538">
    <property type="reaction ID" value="UER00593"/>
</dbReference>
<dbReference type="Proteomes" id="UP000000796">
    <property type="component" value="Chromosome"/>
</dbReference>
<dbReference type="GO" id="GO:0005737">
    <property type="term" value="C:cytoplasm"/>
    <property type="evidence" value="ECO:0007669"/>
    <property type="project" value="UniProtKB-SubCell"/>
</dbReference>
<dbReference type="GO" id="GO:0051539">
    <property type="term" value="F:4 iron, 4 sulfur cluster binding"/>
    <property type="evidence" value="ECO:0007669"/>
    <property type="project" value="UniProtKB-UniRule"/>
</dbReference>
<dbReference type="GO" id="GO:0016992">
    <property type="term" value="F:lipoate synthase activity"/>
    <property type="evidence" value="ECO:0007669"/>
    <property type="project" value="UniProtKB-UniRule"/>
</dbReference>
<dbReference type="GO" id="GO:0046872">
    <property type="term" value="F:metal ion binding"/>
    <property type="evidence" value="ECO:0007669"/>
    <property type="project" value="UniProtKB-KW"/>
</dbReference>
<dbReference type="CDD" id="cd01335">
    <property type="entry name" value="Radical_SAM"/>
    <property type="match status" value="1"/>
</dbReference>
<dbReference type="FunFam" id="3.20.20.70:FF:000040">
    <property type="entry name" value="Lipoyl synthase"/>
    <property type="match status" value="1"/>
</dbReference>
<dbReference type="Gene3D" id="3.20.20.70">
    <property type="entry name" value="Aldolase class I"/>
    <property type="match status" value="1"/>
</dbReference>
<dbReference type="HAMAP" id="MF_00206">
    <property type="entry name" value="Lipoyl_synth"/>
    <property type="match status" value="1"/>
</dbReference>
<dbReference type="InterPro" id="IPR013785">
    <property type="entry name" value="Aldolase_TIM"/>
</dbReference>
<dbReference type="InterPro" id="IPR006638">
    <property type="entry name" value="Elp3/MiaA/NifB-like_rSAM"/>
</dbReference>
<dbReference type="InterPro" id="IPR031691">
    <property type="entry name" value="LIAS_N"/>
</dbReference>
<dbReference type="InterPro" id="IPR003698">
    <property type="entry name" value="Lipoyl_synth"/>
</dbReference>
<dbReference type="InterPro" id="IPR007197">
    <property type="entry name" value="rSAM"/>
</dbReference>
<dbReference type="NCBIfam" id="TIGR00510">
    <property type="entry name" value="lipA"/>
    <property type="match status" value="1"/>
</dbReference>
<dbReference type="NCBIfam" id="NF004019">
    <property type="entry name" value="PRK05481.1"/>
    <property type="match status" value="1"/>
</dbReference>
<dbReference type="NCBIfam" id="NF009544">
    <property type="entry name" value="PRK12928.1"/>
    <property type="match status" value="1"/>
</dbReference>
<dbReference type="PANTHER" id="PTHR10949">
    <property type="entry name" value="LIPOYL SYNTHASE"/>
    <property type="match status" value="1"/>
</dbReference>
<dbReference type="PANTHER" id="PTHR10949:SF0">
    <property type="entry name" value="LIPOYL SYNTHASE, MITOCHONDRIAL"/>
    <property type="match status" value="1"/>
</dbReference>
<dbReference type="Pfam" id="PF16881">
    <property type="entry name" value="LIAS_N"/>
    <property type="match status" value="1"/>
</dbReference>
<dbReference type="Pfam" id="PF04055">
    <property type="entry name" value="Radical_SAM"/>
    <property type="match status" value="1"/>
</dbReference>
<dbReference type="PIRSF" id="PIRSF005963">
    <property type="entry name" value="Lipoyl_synth"/>
    <property type="match status" value="1"/>
</dbReference>
<dbReference type="SFLD" id="SFLDF00271">
    <property type="entry name" value="lipoyl_synthase"/>
    <property type="match status" value="1"/>
</dbReference>
<dbReference type="SFLD" id="SFLDG01058">
    <property type="entry name" value="lipoyl_synthase_like"/>
    <property type="match status" value="1"/>
</dbReference>
<dbReference type="SMART" id="SM00729">
    <property type="entry name" value="Elp3"/>
    <property type="match status" value="1"/>
</dbReference>
<dbReference type="SUPFAM" id="SSF102114">
    <property type="entry name" value="Radical SAM enzymes"/>
    <property type="match status" value="1"/>
</dbReference>
<dbReference type="PROSITE" id="PS51918">
    <property type="entry name" value="RADICAL_SAM"/>
    <property type="match status" value="1"/>
</dbReference>
<feature type="chain" id="PRO_1000077964" description="Lipoyl synthase">
    <location>
        <begin position="1"/>
        <end position="296"/>
    </location>
</feature>
<feature type="domain" description="Radical SAM core" evidence="2">
    <location>
        <begin position="49"/>
        <end position="265"/>
    </location>
</feature>
<feature type="binding site" evidence="1">
    <location>
        <position position="37"/>
    </location>
    <ligand>
        <name>[4Fe-4S] cluster</name>
        <dbReference type="ChEBI" id="CHEBI:49883"/>
        <label>1</label>
    </ligand>
</feature>
<feature type="binding site" evidence="1">
    <location>
        <position position="42"/>
    </location>
    <ligand>
        <name>[4Fe-4S] cluster</name>
        <dbReference type="ChEBI" id="CHEBI:49883"/>
        <label>1</label>
    </ligand>
</feature>
<feature type="binding site" evidence="1">
    <location>
        <position position="48"/>
    </location>
    <ligand>
        <name>[4Fe-4S] cluster</name>
        <dbReference type="ChEBI" id="CHEBI:49883"/>
        <label>1</label>
    </ligand>
</feature>
<feature type="binding site" evidence="1">
    <location>
        <position position="63"/>
    </location>
    <ligand>
        <name>[4Fe-4S] cluster</name>
        <dbReference type="ChEBI" id="CHEBI:49883"/>
        <label>2</label>
        <note>4Fe-4S-S-AdoMet</note>
    </ligand>
</feature>
<feature type="binding site" evidence="1">
    <location>
        <position position="67"/>
    </location>
    <ligand>
        <name>[4Fe-4S] cluster</name>
        <dbReference type="ChEBI" id="CHEBI:49883"/>
        <label>2</label>
        <note>4Fe-4S-S-AdoMet</note>
    </ligand>
</feature>
<feature type="binding site" evidence="1">
    <location>
        <position position="70"/>
    </location>
    <ligand>
        <name>[4Fe-4S] cluster</name>
        <dbReference type="ChEBI" id="CHEBI:49883"/>
        <label>2</label>
        <note>4Fe-4S-S-AdoMet</note>
    </ligand>
</feature>
<feature type="binding site" evidence="1">
    <location>
        <position position="276"/>
    </location>
    <ligand>
        <name>[4Fe-4S] cluster</name>
        <dbReference type="ChEBI" id="CHEBI:49883"/>
        <label>1</label>
    </ligand>
</feature>
<organism>
    <name type="scientific">Rickettsia rickettsii (strain Iowa)</name>
    <dbReference type="NCBI Taxonomy" id="452659"/>
    <lineage>
        <taxon>Bacteria</taxon>
        <taxon>Pseudomonadati</taxon>
        <taxon>Pseudomonadota</taxon>
        <taxon>Alphaproteobacteria</taxon>
        <taxon>Rickettsiales</taxon>
        <taxon>Rickettsiaceae</taxon>
        <taxon>Rickettsieae</taxon>
        <taxon>Rickettsia</taxon>
        <taxon>spotted fever group</taxon>
    </lineage>
</organism>
<comment type="function">
    <text evidence="1">Catalyzes the radical-mediated insertion of two sulfur atoms into the C-6 and C-8 positions of the octanoyl moiety bound to the lipoyl domains of lipoate-dependent enzymes, thereby converting the octanoylated domains into lipoylated derivatives.</text>
</comment>
<comment type="catalytic activity">
    <reaction evidence="1">
        <text>[[Fe-S] cluster scaffold protein carrying a second [4Fe-4S](2+) cluster] + N(6)-octanoyl-L-lysyl-[protein] + 2 oxidized [2Fe-2S]-[ferredoxin] + 2 S-adenosyl-L-methionine + 4 H(+) = [[Fe-S] cluster scaffold protein] + N(6)-[(R)-dihydrolipoyl]-L-lysyl-[protein] + 4 Fe(3+) + 2 hydrogen sulfide + 2 5'-deoxyadenosine + 2 L-methionine + 2 reduced [2Fe-2S]-[ferredoxin]</text>
        <dbReference type="Rhea" id="RHEA:16585"/>
        <dbReference type="Rhea" id="RHEA-COMP:9928"/>
        <dbReference type="Rhea" id="RHEA-COMP:10000"/>
        <dbReference type="Rhea" id="RHEA-COMP:10001"/>
        <dbReference type="Rhea" id="RHEA-COMP:10475"/>
        <dbReference type="Rhea" id="RHEA-COMP:14568"/>
        <dbReference type="Rhea" id="RHEA-COMP:14569"/>
        <dbReference type="ChEBI" id="CHEBI:15378"/>
        <dbReference type="ChEBI" id="CHEBI:17319"/>
        <dbReference type="ChEBI" id="CHEBI:29034"/>
        <dbReference type="ChEBI" id="CHEBI:29919"/>
        <dbReference type="ChEBI" id="CHEBI:33722"/>
        <dbReference type="ChEBI" id="CHEBI:33737"/>
        <dbReference type="ChEBI" id="CHEBI:33738"/>
        <dbReference type="ChEBI" id="CHEBI:57844"/>
        <dbReference type="ChEBI" id="CHEBI:59789"/>
        <dbReference type="ChEBI" id="CHEBI:78809"/>
        <dbReference type="ChEBI" id="CHEBI:83100"/>
        <dbReference type="EC" id="2.8.1.8"/>
    </reaction>
</comment>
<comment type="cofactor">
    <cofactor evidence="1">
        <name>[4Fe-4S] cluster</name>
        <dbReference type="ChEBI" id="CHEBI:49883"/>
    </cofactor>
    <text evidence="1">Binds 2 [4Fe-4S] clusters per subunit. One cluster is coordinated with 3 cysteines and an exchangeable S-adenosyl-L-methionine.</text>
</comment>
<comment type="pathway">
    <text evidence="1">Protein modification; protein lipoylation via endogenous pathway; protein N(6)-(lipoyl)lysine from octanoyl-[acyl-carrier-protein]: step 2/2.</text>
</comment>
<comment type="subcellular location">
    <subcellularLocation>
        <location evidence="1">Cytoplasm</location>
    </subcellularLocation>
</comment>
<comment type="similarity">
    <text evidence="1">Belongs to the radical SAM superfamily. Lipoyl synthase family.</text>
</comment>
<protein>
    <recommendedName>
        <fullName evidence="1">Lipoyl synthase</fullName>
        <ecNumber evidence="1">2.8.1.8</ecNumber>
    </recommendedName>
    <alternativeName>
        <fullName evidence="1">Lip-syn</fullName>
        <shortName evidence="1">LS</shortName>
    </alternativeName>
    <alternativeName>
        <fullName evidence="1">Lipoate synthase</fullName>
    </alternativeName>
    <alternativeName>
        <fullName evidence="1">Lipoic acid synthase</fullName>
    </alternativeName>
    <alternativeName>
        <fullName evidence="1">Sulfur insertion protein LipA</fullName>
    </alternativeName>
</protein>
<gene>
    <name evidence="1" type="primary">lipA</name>
    <name type="ordered locus">RrIowa_1352</name>
</gene>
<keyword id="KW-0004">4Fe-4S</keyword>
<keyword id="KW-0963">Cytoplasm</keyword>
<keyword id="KW-0408">Iron</keyword>
<keyword id="KW-0411">Iron-sulfur</keyword>
<keyword id="KW-0479">Metal-binding</keyword>
<keyword id="KW-0949">S-adenosyl-L-methionine</keyword>
<keyword id="KW-0808">Transferase</keyword>
<sequence length="296" mass="33496">MANLNKRPDWIKVKAPNSTEYYNTKDLIKNLRLNTVCEEAACPNIGECWSKKHTTVMILGSVCTRACRFCNVKTGRPDLLDPYEPQRLAEAVQKLNLKHVVITSVDRDDLEDGGASHFAECISEIRKSSPNTTIEILTPDFLRKEGAAEIIANAKPDVFNHNVETVPSLYKTIRPGARYYNSLSLLHNIKKLSPEIFTKSGMMVGLGEEINEVVQVIDDLREAKVDFLTIGQYLQPTKNHAEVAKYVTPEEFKYLERLAKTKGFLMVSASPLTRSSYHADEDFQKLKENYQQKLVS</sequence>
<name>LIPA_RICRO</name>
<accession>B0BV26</accession>
<evidence type="ECO:0000255" key="1">
    <source>
        <dbReference type="HAMAP-Rule" id="MF_00206"/>
    </source>
</evidence>
<evidence type="ECO:0000255" key="2">
    <source>
        <dbReference type="PROSITE-ProRule" id="PRU01266"/>
    </source>
</evidence>
<reference key="1">
    <citation type="journal article" date="2008" name="Infect. Immun.">
        <title>Genomic comparison of virulent Rickettsia rickettsii Sheila Smith and avirulent Rickettsia rickettsii Iowa.</title>
        <authorList>
            <person name="Ellison D.W."/>
            <person name="Clark T.R."/>
            <person name="Sturdevant D.E."/>
            <person name="Virtaneva K."/>
            <person name="Porcella S.F."/>
            <person name="Hackstadt T."/>
        </authorList>
    </citation>
    <scope>NUCLEOTIDE SEQUENCE [LARGE SCALE GENOMIC DNA]</scope>
    <source>
        <strain>Iowa</strain>
    </source>
</reference>